<dbReference type="EC" id="7.1.1.2" evidence="1"/>
<dbReference type="EMBL" id="AJ421723">
    <property type="protein sequence ID" value="CAD18908.1"/>
    <property type="molecule type" value="Genomic_DNA"/>
</dbReference>
<dbReference type="EMBL" id="AY075116">
    <property type="protein sequence ID" value="AAL79363.1"/>
    <property type="molecule type" value="Genomic_DNA"/>
</dbReference>
<dbReference type="RefSeq" id="NP_536758.1">
    <property type="nucleotide sequence ID" value="NC_003314.1"/>
</dbReference>
<dbReference type="SMR" id="Q8W9N6"/>
<dbReference type="GeneID" id="804499"/>
<dbReference type="CTD" id="4535"/>
<dbReference type="GO" id="GO:0005743">
    <property type="term" value="C:mitochondrial inner membrane"/>
    <property type="evidence" value="ECO:0000250"/>
    <property type="project" value="UniProtKB"/>
</dbReference>
<dbReference type="GO" id="GO:0008137">
    <property type="term" value="F:NADH dehydrogenase (ubiquinone) activity"/>
    <property type="evidence" value="ECO:0000250"/>
    <property type="project" value="UniProtKB"/>
</dbReference>
<dbReference type="GO" id="GO:0006120">
    <property type="term" value="P:mitochondrial electron transport, NADH to ubiquinone"/>
    <property type="evidence" value="ECO:0000250"/>
    <property type="project" value="UniProtKB"/>
</dbReference>
<dbReference type="GO" id="GO:0032981">
    <property type="term" value="P:mitochondrial respiratory chain complex I assembly"/>
    <property type="evidence" value="ECO:0000250"/>
    <property type="project" value="UniProtKB"/>
</dbReference>
<dbReference type="HAMAP" id="MF_01350">
    <property type="entry name" value="NDH1_NuoH"/>
    <property type="match status" value="1"/>
</dbReference>
<dbReference type="InterPro" id="IPR001694">
    <property type="entry name" value="NADH_UbQ_OxRdtase_su1/FPO"/>
</dbReference>
<dbReference type="InterPro" id="IPR018086">
    <property type="entry name" value="NADH_UbQ_OxRdtase_su1_CS"/>
</dbReference>
<dbReference type="PANTHER" id="PTHR11432">
    <property type="entry name" value="NADH DEHYDROGENASE SUBUNIT 1"/>
    <property type="match status" value="1"/>
</dbReference>
<dbReference type="PANTHER" id="PTHR11432:SF3">
    <property type="entry name" value="NADH-UBIQUINONE OXIDOREDUCTASE CHAIN 1"/>
    <property type="match status" value="1"/>
</dbReference>
<dbReference type="Pfam" id="PF00146">
    <property type="entry name" value="NADHdh"/>
    <property type="match status" value="1"/>
</dbReference>
<dbReference type="PROSITE" id="PS00667">
    <property type="entry name" value="COMPLEX1_ND1_1"/>
    <property type="match status" value="1"/>
</dbReference>
<dbReference type="PROSITE" id="PS00668">
    <property type="entry name" value="COMPLEX1_ND1_2"/>
    <property type="match status" value="1"/>
</dbReference>
<name>NU1M_DUGDU</name>
<reference key="1">
    <citation type="journal article" date="2002" name="Proc. Natl. Acad. Sci. U.S.A.">
        <title>Mammalian mitogenomic relationships and the root of the eutherian tree.</title>
        <authorList>
            <person name="Arnason U."/>
            <person name="Adegoke J.A."/>
            <person name="Bodin K."/>
            <person name="Born E.W."/>
            <person name="Esa Y.B."/>
            <person name="Gullberg A."/>
            <person name="Nilsson M."/>
            <person name="Short R.V."/>
            <person name="Xu X."/>
            <person name="Janke A."/>
        </authorList>
    </citation>
    <scope>NUCLEOTIDE SEQUENCE [GENOMIC DNA]</scope>
</reference>
<reference key="2">
    <citation type="submission" date="2002-01" db="EMBL/GenBank/DDBJ databases">
        <title>Complete mitochondrial genome of a dugong.</title>
        <authorList>
            <person name="McLenachan P.A."/>
            <person name="Phillips M.J."/>
            <person name="Penny D."/>
        </authorList>
    </citation>
    <scope>NUCLEOTIDE SEQUENCE [GENOMIC DNA]</scope>
</reference>
<sequence>MFMINLFSLIIPILLAVAFLTLVERKTLGYMQLRKGPNVVGPYGLLQPFADAIKLFTKEPLRPLTSSKFMFTIAPALALTLALTMWVPLPMPYPLINMNLSMLFILAMSSLAVYSILWSGWASNSKYALIGALRAVAQTISYEVSLAIILLPTMLMNGSFTLSTLTTTQEHLWLIFPLWPLAMMWFVSTLAETNRAPFDLTEGESELVSGFNVEYAAGPFALFFMTEYANIIMMNALTAILFLGTFHNPLLPEAHTINLILKTSLLTICFLWVRASYPRFRYDQLMHLLWKNFLPLTLALCMWHMSIPIMLACIPPQT</sequence>
<protein>
    <recommendedName>
        <fullName>NADH-ubiquinone oxidoreductase chain 1</fullName>
        <ecNumber evidence="1">7.1.1.2</ecNumber>
    </recommendedName>
    <alternativeName>
        <fullName>NADH dehydrogenase subunit 1</fullName>
    </alternativeName>
</protein>
<gene>
    <name type="primary">MT-ND1</name>
    <name type="synonym">MTND1</name>
    <name type="synonym">NADH1</name>
    <name type="synonym">ND1</name>
</gene>
<feature type="chain" id="PRO_0000117401" description="NADH-ubiquinone oxidoreductase chain 1">
    <location>
        <begin position="1"/>
        <end position="318"/>
    </location>
</feature>
<feature type="transmembrane region" description="Helical" evidence="3">
    <location>
        <begin position="2"/>
        <end position="22"/>
    </location>
</feature>
<feature type="transmembrane region" description="Helical" evidence="3">
    <location>
        <begin position="69"/>
        <end position="89"/>
    </location>
</feature>
<feature type="transmembrane region" description="Helical" evidence="3">
    <location>
        <begin position="102"/>
        <end position="122"/>
    </location>
</feature>
<feature type="transmembrane region" description="Helical" evidence="3">
    <location>
        <begin position="146"/>
        <end position="166"/>
    </location>
</feature>
<feature type="transmembrane region" description="Helical" evidence="3">
    <location>
        <begin position="171"/>
        <end position="191"/>
    </location>
</feature>
<feature type="transmembrane region" description="Helical" evidence="3">
    <location>
        <begin position="231"/>
        <end position="251"/>
    </location>
</feature>
<feature type="transmembrane region" description="Helical" evidence="3">
    <location>
        <begin position="253"/>
        <end position="273"/>
    </location>
</feature>
<feature type="transmembrane region" description="Helical" evidence="3">
    <location>
        <begin position="294"/>
        <end position="314"/>
    </location>
</feature>
<geneLocation type="mitochondrion"/>
<organism>
    <name type="scientific">Dugong dugon</name>
    <name type="common">Dugong</name>
    <name type="synonym">Trichechus dugon</name>
    <dbReference type="NCBI Taxonomy" id="29137"/>
    <lineage>
        <taxon>Eukaryota</taxon>
        <taxon>Metazoa</taxon>
        <taxon>Chordata</taxon>
        <taxon>Craniata</taxon>
        <taxon>Vertebrata</taxon>
        <taxon>Euteleostomi</taxon>
        <taxon>Mammalia</taxon>
        <taxon>Eutheria</taxon>
        <taxon>Afrotheria</taxon>
        <taxon>Sirenia</taxon>
        <taxon>Dugongidae</taxon>
        <taxon>Dugong</taxon>
    </lineage>
</organism>
<keyword id="KW-0249">Electron transport</keyword>
<keyword id="KW-0472">Membrane</keyword>
<keyword id="KW-0496">Mitochondrion</keyword>
<keyword id="KW-0999">Mitochondrion inner membrane</keyword>
<keyword id="KW-0520">NAD</keyword>
<keyword id="KW-0679">Respiratory chain</keyword>
<keyword id="KW-1278">Translocase</keyword>
<keyword id="KW-0812">Transmembrane</keyword>
<keyword id="KW-1133">Transmembrane helix</keyword>
<keyword id="KW-0813">Transport</keyword>
<keyword id="KW-0830">Ubiquinone</keyword>
<comment type="function">
    <text evidence="1">Core subunit of the mitochondrial membrane respiratory chain NADH dehydrogenase (Complex I) which catalyzes electron transfer from NADH through the respiratory chain, using ubiquinone as an electron acceptor. Essential for the catalytic activity and assembly of complex I.</text>
</comment>
<comment type="catalytic activity">
    <reaction evidence="1">
        <text>a ubiquinone + NADH + 5 H(+)(in) = a ubiquinol + NAD(+) + 4 H(+)(out)</text>
        <dbReference type="Rhea" id="RHEA:29091"/>
        <dbReference type="Rhea" id="RHEA-COMP:9565"/>
        <dbReference type="Rhea" id="RHEA-COMP:9566"/>
        <dbReference type="ChEBI" id="CHEBI:15378"/>
        <dbReference type="ChEBI" id="CHEBI:16389"/>
        <dbReference type="ChEBI" id="CHEBI:17976"/>
        <dbReference type="ChEBI" id="CHEBI:57540"/>
        <dbReference type="ChEBI" id="CHEBI:57945"/>
        <dbReference type="EC" id="7.1.1.2"/>
    </reaction>
</comment>
<comment type="subunit">
    <text evidence="2">Core subunit of respiratory chain NADH dehydrogenase (Complex I) which is composed of 45 different subunits.</text>
</comment>
<comment type="subcellular location">
    <subcellularLocation>
        <location evidence="2">Mitochondrion inner membrane</location>
        <topology evidence="3">Multi-pass membrane protein</topology>
    </subcellularLocation>
</comment>
<comment type="similarity">
    <text evidence="4">Belongs to the complex I subunit 1 family.</text>
</comment>
<accession>Q8W9N6</accession>
<evidence type="ECO:0000250" key="1">
    <source>
        <dbReference type="UniProtKB" id="P03886"/>
    </source>
</evidence>
<evidence type="ECO:0000250" key="2">
    <source>
        <dbReference type="UniProtKB" id="P03887"/>
    </source>
</evidence>
<evidence type="ECO:0000255" key="3"/>
<evidence type="ECO:0000305" key="4"/>
<proteinExistence type="inferred from homology"/>